<accession>Q8MJV3</accession>
<gene>
    <name type="primary">NPBWR1</name>
    <name type="synonym">GPR7</name>
</gene>
<dbReference type="EMBL" id="AB085946">
    <property type="protein sequence ID" value="BAC07179.1"/>
    <property type="molecule type" value="mRNA"/>
</dbReference>
<dbReference type="SMR" id="Q8MJV3"/>
<dbReference type="FunCoup" id="Q8MJV3">
    <property type="interactions" value="1"/>
</dbReference>
<dbReference type="STRING" id="9913.ENSBTAP00000021510"/>
<dbReference type="GlyCosmos" id="Q8MJV3">
    <property type="glycosylation" value="3 sites, No reported glycans"/>
</dbReference>
<dbReference type="GlyGen" id="Q8MJV3">
    <property type="glycosylation" value="3 sites"/>
</dbReference>
<dbReference type="PaxDb" id="9913-ENSBTAP00000021510"/>
<dbReference type="eggNOG" id="KOG3656">
    <property type="taxonomic scope" value="Eukaryota"/>
</dbReference>
<dbReference type="InParanoid" id="Q8MJV3"/>
<dbReference type="OrthoDB" id="6076970at2759"/>
<dbReference type="Proteomes" id="UP000009136">
    <property type="component" value="Unplaced"/>
</dbReference>
<dbReference type="GO" id="GO:0043005">
    <property type="term" value="C:neuron projection"/>
    <property type="evidence" value="ECO:0000318"/>
    <property type="project" value="GO_Central"/>
</dbReference>
<dbReference type="GO" id="GO:0005886">
    <property type="term" value="C:plasma membrane"/>
    <property type="evidence" value="ECO:0000318"/>
    <property type="project" value="GO_Central"/>
</dbReference>
<dbReference type="GO" id="GO:0004930">
    <property type="term" value="F:G protein-coupled receptor activity"/>
    <property type="evidence" value="ECO:0000318"/>
    <property type="project" value="GO_Central"/>
</dbReference>
<dbReference type="GO" id="GO:0042923">
    <property type="term" value="F:neuropeptide binding"/>
    <property type="evidence" value="ECO:0000318"/>
    <property type="project" value="GO_Central"/>
</dbReference>
<dbReference type="GO" id="GO:0008188">
    <property type="term" value="F:neuropeptide receptor activity"/>
    <property type="evidence" value="ECO:0007669"/>
    <property type="project" value="InterPro"/>
</dbReference>
<dbReference type="GO" id="GO:0007218">
    <property type="term" value="P:neuropeptide signaling pathway"/>
    <property type="evidence" value="ECO:0000318"/>
    <property type="project" value="GO_Central"/>
</dbReference>
<dbReference type="CDD" id="cd15087">
    <property type="entry name" value="7tmA_NPBWR"/>
    <property type="match status" value="1"/>
</dbReference>
<dbReference type="FunFam" id="1.20.1070.10:FF:000102">
    <property type="entry name" value="neuropeptides B/W receptor type 1"/>
    <property type="match status" value="1"/>
</dbReference>
<dbReference type="Gene3D" id="1.20.1070.10">
    <property type="entry name" value="Rhodopsin 7-helix transmembrane proteins"/>
    <property type="match status" value="1"/>
</dbReference>
<dbReference type="InterPro" id="IPR000276">
    <property type="entry name" value="GPCR_Rhodpsn"/>
</dbReference>
<dbReference type="InterPro" id="IPR017452">
    <property type="entry name" value="GPCR_Rhodpsn_7TM"/>
</dbReference>
<dbReference type="InterPro" id="IPR009150">
    <property type="entry name" value="Neuropept_B/W_rcpt"/>
</dbReference>
<dbReference type="PANTHER" id="PTHR24229:SF47">
    <property type="entry name" value="NEUROPEPTIDES B_W RECEPTOR TYPE 1"/>
    <property type="match status" value="1"/>
</dbReference>
<dbReference type="PANTHER" id="PTHR24229">
    <property type="entry name" value="NEUROPEPTIDES RECEPTOR"/>
    <property type="match status" value="1"/>
</dbReference>
<dbReference type="Pfam" id="PF00001">
    <property type="entry name" value="7tm_1"/>
    <property type="match status" value="1"/>
</dbReference>
<dbReference type="PRINTS" id="PR00237">
    <property type="entry name" value="GPCRRHODOPSN"/>
</dbReference>
<dbReference type="PRINTS" id="PR01855">
    <property type="entry name" value="NRPEPTIDEWR"/>
</dbReference>
<dbReference type="SUPFAM" id="SSF81321">
    <property type="entry name" value="Family A G protein-coupled receptor-like"/>
    <property type="match status" value="1"/>
</dbReference>
<dbReference type="PROSITE" id="PS00237">
    <property type="entry name" value="G_PROTEIN_RECEP_F1_1"/>
    <property type="match status" value="1"/>
</dbReference>
<dbReference type="PROSITE" id="PS50262">
    <property type="entry name" value="G_PROTEIN_RECEP_F1_2"/>
    <property type="match status" value="1"/>
</dbReference>
<keyword id="KW-1003">Cell membrane</keyword>
<keyword id="KW-1015">Disulfide bond</keyword>
<keyword id="KW-0297">G-protein coupled receptor</keyword>
<keyword id="KW-0325">Glycoprotein</keyword>
<keyword id="KW-0472">Membrane</keyword>
<keyword id="KW-0675">Receptor</keyword>
<keyword id="KW-1185">Reference proteome</keyword>
<keyword id="KW-0807">Transducer</keyword>
<keyword id="KW-0812">Transmembrane</keyword>
<keyword id="KW-1133">Transmembrane helix</keyword>
<evidence type="ECO:0000250" key="1"/>
<evidence type="ECO:0000255" key="2"/>
<evidence type="ECO:0000255" key="3">
    <source>
        <dbReference type="PROSITE-ProRule" id="PRU00521"/>
    </source>
</evidence>
<protein>
    <recommendedName>
        <fullName>Neuropeptides B/W receptor type 1</fullName>
    </recommendedName>
    <alternativeName>
        <fullName>G-protein coupled receptor 7</fullName>
    </alternativeName>
</protein>
<reference key="1">
    <citation type="journal article" date="2002" name="J. Biol. Chem.">
        <title>Identification of a neuropeptide modified with bromine as an endogenous ligand for GPR7.</title>
        <authorList>
            <person name="Fujii R."/>
            <person name="Yoshida H."/>
            <person name="Fukusumi S."/>
            <person name="Habata Y."/>
            <person name="Hosoya M."/>
            <person name="Kawamata Y."/>
            <person name="Yano T."/>
            <person name="Hinuma S."/>
            <person name="Kitada C."/>
            <person name="Asami T."/>
            <person name="Mori M."/>
            <person name="Fujisawa Y."/>
            <person name="Fujino M."/>
        </authorList>
    </citation>
    <scope>NUCLEOTIDE SEQUENCE [MRNA]</scope>
</reference>
<feature type="chain" id="PRO_0000069517" description="Neuropeptides B/W receptor type 1">
    <location>
        <begin position="1"/>
        <end position="331"/>
    </location>
</feature>
<feature type="topological domain" description="Extracellular" evidence="2">
    <location>
        <begin position="1"/>
        <end position="43"/>
    </location>
</feature>
<feature type="transmembrane region" description="Helical; Name=1" evidence="2">
    <location>
        <begin position="44"/>
        <end position="66"/>
    </location>
</feature>
<feature type="topological domain" description="Cytoplasmic" evidence="2">
    <location>
        <begin position="67"/>
        <end position="75"/>
    </location>
</feature>
<feature type="transmembrane region" description="Helical; Name=2" evidence="2">
    <location>
        <begin position="76"/>
        <end position="100"/>
    </location>
</feature>
<feature type="topological domain" description="Extracellular" evidence="2">
    <location>
        <begin position="101"/>
        <end position="115"/>
    </location>
</feature>
<feature type="transmembrane region" description="Helical; Name=3" evidence="2">
    <location>
        <begin position="116"/>
        <end position="135"/>
    </location>
</feature>
<feature type="topological domain" description="Cytoplasmic" evidence="2">
    <location>
        <begin position="136"/>
        <end position="160"/>
    </location>
</feature>
<feature type="transmembrane region" description="Helical; Name=4" evidence="2">
    <location>
        <begin position="161"/>
        <end position="180"/>
    </location>
</feature>
<feature type="topological domain" description="Extracellular" evidence="2">
    <location>
        <begin position="181"/>
        <end position="205"/>
    </location>
</feature>
<feature type="transmembrane region" description="Helical; Name=5" evidence="2">
    <location>
        <begin position="206"/>
        <end position="227"/>
    </location>
</feature>
<feature type="topological domain" description="Cytoplasmic" evidence="2">
    <location>
        <begin position="228"/>
        <end position="251"/>
    </location>
</feature>
<feature type="transmembrane region" description="Helical; Name=6" evidence="2">
    <location>
        <begin position="252"/>
        <end position="276"/>
    </location>
</feature>
<feature type="topological domain" description="Extracellular" evidence="2">
    <location>
        <begin position="277"/>
        <end position="286"/>
    </location>
</feature>
<feature type="transmembrane region" description="Helical; Name=7" evidence="2">
    <location>
        <begin position="287"/>
        <end position="301"/>
    </location>
</feature>
<feature type="topological domain" description="Cytoplasmic" evidence="2">
    <location>
        <begin position="302"/>
        <end position="331"/>
    </location>
</feature>
<feature type="glycosylation site" description="N-linked (GlcNAc...) asparagine" evidence="2">
    <location>
        <position position="3"/>
    </location>
</feature>
<feature type="glycosylation site" description="N-linked (GlcNAc...) asparagine" evidence="2">
    <location>
        <position position="13"/>
    </location>
</feature>
<feature type="glycosylation site" description="N-linked (GlcNAc...) asparagine" evidence="2">
    <location>
        <position position="27"/>
    </location>
</feature>
<feature type="disulfide bond" evidence="3">
    <location>
        <begin position="112"/>
        <end position="191"/>
    </location>
</feature>
<name>NPBW1_BOVIN</name>
<proteinExistence type="evidence at transcript level"/>
<sequence>MHNASYWGPERANTSCPAPAPTLGCPNASGPAPPLPPPLAVAVPVVYAVICAVGLAGNSAVLFVLLRAPRRKTVTNLFILNLAVADELFTLVPPVNIADFLLRRWPFGELLCKLVVAVDQYNTFSSLYFLTVMSADRYLVVLATAESRRVAGRTYGAARAVSLAVWGVATLVVLPFAVFARLDEEQGRRQCVLVFPQPEALWWRASRLYTLVLGFAIPVSTICVLYTSLLCRLRAIRLDSHAKALDRAKKRVTVLVVAILAVCLLVWTPYHLSTVVALTTDLPQTPLVIAVSYFITSLSYANSCLNPFLYAFLDDSFRRSLRQLLACRTTS</sequence>
<organism>
    <name type="scientific">Bos taurus</name>
    <name type="common">Bovine</name>
    <dbReference type="NCBI Taxonomy" id="9913"/>
    <lineage>
        <taxon>Eukaryota</taxon>
        <taxon>Metazoa</taxon>
        <taxon>Chordata</taxon>
        <taxon>Craniata</taxon>
        <taxon>Vertebrata</taxon>
        <taxon>Euteleostomi</taxon>
        <taxon>Mammalia</taxon>
        <taxon>Eutheria</taxon>
        <taxon>Laurasiatheria</taxon>
        <taxon>Artiodactyla</taxon>
        <taxon>Ruminantia</taxon>
        <taxon>Pecora</taxon>
        <taxon>Bovidae</taxon>
        <taxon>Bovinae</taxon>
        <taxon>Bos</taxon>
    </lineage>
</organism>
<comment type="function">
    <text evidence="1">Interacts specifically with a number of opioid ligands. Receptor for neuropeptides B and W, which may be involved in neuroendocrine system regulation, food intake and the organization of other signals (By similarity).</text>
</comment>
<comment type="subcellular location">
    <subcellularLocation>
        <location>Cell membrane</location>
        <topology>Multi-pass membrane protein</topology>
    </subcellularLocation>
</comment>
<comment type="similarity">
    <text evidence="3">Belongs to the G-protein coupled receptor 1 family.</text>
</comment>